<proteinExistence type="evidence at protein level"/>
<comment type="function">
    <text evidence="5 6 7 8 9">Transcriptional regulator and common SMAD (co-SMAD), required to regulate entry into a developmentally arrested larval state known as dauer, in response to harsh environmental conditions (PubMed:9334330). Probable component of transcriptional regulatory complex with SMAD protein daf-5 (PubMed:14681186). Acts antagonistically to SMAD signaling downstream of TGF-beta-like daf-7 signaling (PubMed:20081192). Binds to the 5'-GTCTG-3' motif found in regulatory regions and may modulate the expression of genes involved in TGF-beta-like daf-7 and Notch lag-2 signaling (PubMed:20081192, PubMed:28811311, PubMed:9834189). May regulate gene expression outside the dauer pathway (PubMed:9834189).</text>
</comment>
<comment type="subunit">
    <text evidence="5 6">Interacts with R-SMADs daf-8 and daf-14 (PubMed:20081192). Interacts with daf-14 in a daf-8 dependent manner (PubMed:20081192). May interact with daf-5 (PubMed:14681186).</text>
</comment>
<comment type="interaction">
    <interactant intactId="EBI-326363">
        <id>Q95QI7</id>
    </interactant>
    <interactant intactId="EBI-360260">
        <id>G5EDM7</id>
        <label>daf-5</label>
    </interactant>
    <organismsDiffer>false</organismsDiffer>
    <experiments>4</experiments>
</comment>
<comment type="interaction">
    <interactant intactId="EBI-326363">
        <id>Q95QI7</id>
    </interactant>
    <interactant intactId="EBI-360227">
        <id>Q9XVS0</id>
        <label>fath-1</label>
    </interactant>
    <organismsDiffer>false</organismsDiffer>
    <experiments>2</experiments>
</comment>
<comment type="interaction">
    <interactant intactId="EBI-326363">
        <id>Q95QI7</id>
    </interactant>
    <interactant intactId="EBI-311928">
        <id>G5EF87</id>
        <label>swsn-1</label>
    </interactant>
    <organismsDiffer>false</organismsDiffer>
    <experiments>2</experiments>
</comment>
<comment type="subcellular location">
    <subcellularLocation>
        <location evidence="3 8">Cytoplasm</location>
    </subcellularLocation>
    <subcellularLocation>
        <location evidence="3 8">Nucleus</location>
    </subcellularLocation>
    <subcellularLocation>
        <location evidence="8">Chromosome</location>
    </subcellularLocation>
    <text evidence="8">Localization observed during mitosis.</text>
</comment>
<comment type="alternative products">
    <event type="alternative splicing"/>
    <isoform>
        <id>Q95QI7-1</id>
        <name evidence="15">a</name>
        <sequence type="displayed"/>
    </isoform>
    <isoform>
        <id>Q95QI7-2</id>
        <name evidence="18">d</name>
        <sequence type="described" ref="VSP_060998"/>
    </isoform>
    <isoform>
        <id>Q95QI7-3</id>
        <name evidence="20">f</name>
        <sequence type="described" ref="VSP_060996"/>
    </isoform>
    <isoform>
        <id>Q95QI7-4</id>
        <name evidence="19">e</name>
        <sequence type="described" ref="VSP_060996 VSP_060998"/>
    </isoform>
    <isoform>
        <id>Q95QI7-5</id>
        <name evidence="16">b</name>
        <sequence type="described" ref="VSP_060996 VSP_060997"/>
    </isoform>
    <isoform>
        <id>Q95QI7-6</id>
        <name evidence="17">c</name>
        <sequence type="described" ref="VSP_060995"/>
    </isoform>
    <isoform>
        <id>Q95QI7-7</id>
        <name evidence="21">g</name>
        <sequence type="described" ref="VSP_060994 VSP_060998"/>
    </isoform>
    <isoform>
        <id>Q95QI7-8</id>
        <name evidence="22">h</name>
        <sequence type="described" ref="VSP_060994"/>
    </isoform>
    <isoform>
        <id>Q95QI7-9</id>
        <name evidence="23">i</name>
        <sequence type="described" ref="VSP_060993"/>
    </isoform>
</comment>
<comment type="similarity">
    <text evidence="3">Belongs to the dwarfin/SMAD family.</text>
</comment>
<dbReference type="EMBL" id="AF005205">
    <property type="protein sequence ID" value="AAB61748.1"/>
    <property type="molecule type" value="mRNA"/>
</dbReference>
<dbReference type="EMBL" id="BX284606">
    <property type="protein sequence ID" value="CCD69986.1"/>
    <property type="molecule type" value="Genomic_DNA"/>
</dbReference>
<dbReference type="EMBL" id="BX284606">
    <property type="protein sequence ID" value="CCD69987.1"/>
    <property type="molecule type" value="Genomic_DNA"/>
</dbReference>
<dbReference type="EMBL" id="BX284606">
    <property type="protein sequence ID" value="CCD69988.1"/>
    <property type="molecule type" value="Genomic_DNA"/>
</dbReference>
<dbReference type="EMBL" id="BX284606">
    <property type="protein sequence ID" value="CTQ87052.1"/>
    <property type="molecule type" value="Genomic_DNA"/>
</dbReference>
<dbReference type="EMBL" id="BX284606">
    <property type="protein sequence ID" value="CTQ87053.1"/>
    <property type="molecule type" value="Genomic_DNA"/>
</dbReference>
<dbReference type="EMBL" id="BX284606">
    <property type="protein sequence ID" value="CTQ87054.1"/>
    <property type="molecule type" value="Genomic_DNA"/>
</dbReference>
<dbReference type="EMBL" id="BX284606">
    <property type="protein sequence ID" value="CTQ87055.1"/>
    <property type="molecule type" value="Genomic_DNA"/>
</dbReference>
<dbReference type="EMBL" id="BX284606">
    <property type="protein sequence ID" value="CTQ87056.1"/>
    <property type="molecule type" value="Genomic_DNA"/>
</dbReference>
<dbReference type="EMBL" id="BX284606">
    <property type="protein sequence ID" value="CTQ87057.1"/>
    <property type="molecule type" value="Genomic_DNA"/>
</dbReference>
<dbReference type="RefSeq" id="NP_001024604.1">
    <molecule id="Q95QI7-5"/>
    <property type="nucleotide sequence ID" value="NM_001029433.7"/>
</dbReference>
<dbReference type="RefSeq" id="NP_001024605.1">
    <molecule id="Q95QI7-6"/>
    <property type="nucleotide sequence ID" value="NM_001029434.5"/>
</dbReference>
<dbReference type="RefSeq" id="NP_001300341.1">
    <molecule id="Q95QI7-2"/>
    <property type="nucleotide sequence ID" value="NM_001313412.4"/>
</dbReference>
<dbReference type="RefSeq" id="NP_001300342.1">
    <molecule id="Q95QI7-4"/>
    <property type="nucleotide sequence ID" value="NM_001313413.4"/>
</dbReference>
<dbReference type="RefSeq" id="NP_001300343.1">
    <molecule id="Q95QI7-3"/>
    <property type="nucleotide sequence ID" value="NM_001313414.4"/>
</dbReference>
<dbReference type="RefSeq" id="NP_001300344.1">
    <molecule id="Q95QI7-7"/>
    <property type="nucleotide sequence ID" value="NM_001313415.4"/>
</dbReference>
<dbReference type="RefSeq" id="NP_001300345.1">
    <property type="nucleotide sequence ID" value="NM_001313416.1"/>
</dbReference>
<dbReference type="RefSeq" id="NP_001300346.1">
    <molecule id="Q95QI7-9"/>
    <property type="nucleotide sequence ID" value="NM_001313417.4"/>
</dbReference>
<dbReference type="RefSeq" id="NP_001368578.1">
    <molecule id="Q95QI7-8"/>
    <property type="nucleotide sequence ID" value="NM_001380898.1"/>
</dbReference>
<dbReference type="RefSeq" id="NP_508161.3">
    <molecule id="Q95QI7-1"/>
    <property type="nucleotide sequence ID" value="NM_075760.4"/>
</dbReference>
<dbReference type="SMR" id="Q95QI7"/>
<dbReference type="DIP" id="DIP-26559N"/>
<dbReference type="FunCoup" id="Q95QI7">
    <property type="interactions" value="1159"/>
</dbReference>
<dbReference type="IntAct" id="Q95QI7">
    <property type="interactions" value="15"/>
</dbReference>
<dbReference type="STRING" id="6239.F25E2.5d.1"/>
<dbReference type="PaxDb" id="6239-F25E2.5a"/>
<dbReference type="PeptideAtlas" id="Q95QI7"/>
<dbReference type="EnsemblMetazoa" id="F25E2.5a.1">
    <molecule id="Q95QI7-1"/>
    <property type="protein sequence ID" value="F25E2.5a.1"/>
    <property type="gene ID" value="WBGene00000899"/>
</dbReference>
<dbReference type="EnsemblMetazoa" id="F25E2.5b.1">
    <molecule id="Q95QI7-5"/>
    <property type="protein sequence ID" value="F25E2.5b.1"/>
    <property type="gene ID" value="WBGene00000899"/>
</dbReference>
<dbReference type="EnsemblMetazoa" id="F25E2.5c.1">
    <molecule id="Q95QI7-6"/>
    <property type="protein sequence ID" value="F25E2.5c.1"/>
    <property type="gene ID" value="WBGene00000899"/>
</dbReference>
<dbReference type="EnsemblMetazoa" id="F25E2.5d.1">
    <molecule id="Q95QI7-2"/>
    <property type="protein sequence ID" value="F25E2.5d.1"/>
    <property type="gene ID" value="WBGene00000899"/>
</dbReference>
<dbReference type="EnsemblMetazoa" id="F25E2.5e.1">
    <molecule id="Q95QI7-4"/>
    <property type="protein sequence ID" value="F25E2.5e.1"/>
    <property type="gene ID" value="WBGene00000899"/>
</dbReference>
<dbReference type="EnsemblMetazoa" id="F25E2.5f.1">
    <molecule id="Q95QI7-3"/>
    <property type="protein sequence ID" value="F25E2.5f.1"/>
    <property type="gene ID" value="WBGene00000899"/>
</dbReference>
<dbReference type="EnsemblMetazoa" id="F25E2.5g.1">
    <molecule id="Q95QI7-7"/>
    <property type="protein sequence ID" value="F25E2.5g.1"/>
    <property type="gene ID" value="WBGene00000899"/>
</dbReference>
<dbReference type="EnsemblMetazoa" id="F25E2.5h.1">
    <molecule id="Q95QI7-8"/>
    <property type="protein sequence ID" value="F25E2.5h.1"/>
    <property type="gene ID" value="WBGene00000899"/>
</dbReference>
<dbReference type="EnsemblMetazoa" id="F25E2.5i.1">
    <molecule id="Q95QI7-9"/>
    <property type="protein sequence ID" value="F25E2.5i.1"/>
    <property type="gene ID" value="WBGene00000899"/>
</dbReference>
<dbReference type="GeneID" id="180431"/>
<dbReference type="KEGG" id="cel:CELE_F25E2.5"/>
<dbReference type="UCSC" id="F25E2.5c">
    <property type="organism name" value="c. elegans"/>
</dbReference>
<dbReference type="AGR" id="WB:WBGene00000899"/>
<dbReference type="CTD" id="180431"/>
<dbReference type="WormBase" id="F25E2.5a">
    <molecule id="Q95QI7-1"/>
    <property type="protein sequence ID" value="CE28002"/>
    <property type="gene ID" value="WBGene00000899"/>
    <property type="gene designation" value="daf-3"/>
</dbReference>
<dbReference type="WormBase" id="F25E2.5b">
    <molecule id="Q95QI7-5"/>
    <property type="protein sequence ID" value="CE30963"/>
    <property type="gene ID" value="WBGene00000899"/>
    <property type="gene designation" value="daf-3"/>
</dbReference>
<dbReference type="WormBase" id="F25E2.5c">
    <molecule id="Q95QI7-6"/>
    <property type="protein sequence ID" value="CE26364"/>
    <property type="gene ID" value="WBGene00000899"/>
    <property type="gene designation" value="daf-3"/>
</dbReference>
<dbReference type="WormBase" id="F25E2.5d">
    <molecule id="Q95QI7-2"/>
    <property type="protein sequence ID" value="CE50706"/>
    <property type="gene ID" value="WBGene00000899"/>
    <property type="gene designation" value="daf-3"/>
</dbReference>
<dbReference type="WormBase" id="F25E2.5e">
    <molecule id="Q95QI7-4"/>
    <property type="protein sequence ID" value="CE50732"/>
    <property type="gene ID" value="WBGene00000899"/>
    <property type="gene designation" value="daf-3"/>
</dbReference>
<dbReference type="WormBase" id="F25E2.5f">
    <molecule id="Q95QI7-3"/>
    <property type="protein sequence ID" value="CE28003"/>
    <property type="gene ID" value="WBGene00000899"/>
    <property type="gene designation" value="daf-3"/>
</dbReference>
<dbReference type="WormBase" id="F25E2.5g">
    <molecule id="Q95QI7-7"/>
    <property type="protein sequence ID" value="CE50852"/>
    <property type="gene ID" value="WBGene00000899"/>
    <property type="gene designation" value="daf-3"/>
</dbReference>
<dbReference type="WormBase" id="F25E2.5h">
    <molecule id="Q95QI7-8"/>
    <property type="protein sequence ID" value="CE50691"/>
    <property type="gene ID" value="WBGene00000899"/>
    <property type="gene designation" value="daf-3"/>
</dbReference>
<dbReference type="WormBase" id="F25E2.5i">
    <molecule id="Q95QI7-9"/>
    <property type="protein sequence ID" value="CE50737"/>
    <property type="gene ID" value="WBGene00000899"/>
    <property type="gene designation" value="daf-3"/>
</dbReference>
<dbReference type="eggNOG" id="KOG3701">
    <property type="taxonomic scope" value="Eukaryota"/>
</dbReference>
<dbReference type="HOGENOM" id="CLU_323960_0_0_1"/>
<dbReference type="InParanoid" id="Q95QI7"/>
<dbReference type="OMA" id="HCKHAFE"/>
<dbReference type="OrthoDB" id="5875866at2759"/>
<dbReference type="PhylomeDB" id="Q95QI7"/>
<dbReference type="SignaLink" id="Q95QI7"/>
<dbReference type="PRO" id="PR:Q95QI7"/>
<dbReference type="Proteomes" id="UP000001940">
    <property type="component" value="Chromosome X"/>
</dbReference>
<dbReference type="Bgee" id="WBGene00000899">
    <property type="expression patterns" value="Expressed in pharyngeal muscle cell (C elegans) and 4 other cell types or tissues"/>
</dbReference>
<dbReference type="ExpressionAtlas" id="Q95QI7">
    <property type="expression patterns" value="baseline and differential"/>
</dbReference>
<dbReference type="GO" id="GO:0000793">
    <property type="term" value="C:condensed chromosome"/>
    <property type="evidence" value="ECO:0000314"/>
    <property type="project" value="WormBase"/>
</dbReference>
<dbReference type="GO" id="GO:0005737">
    <property type="term" value="C:cytoplasm"/>
    <property type="evidence" value="ECO:0000314"/>
    <property type="project" value="WormBase"/>
</dbReference>
<dbReference type="GO" id="GO:0071144">
    <property type="term" value="C:heteromeric SMAD protein complex"/>
    <property type="evidence" value="ECO:0000318"/>
    <property type="project" value="GO_Central"/>
</dbReference>
<dbReference type="GO" id="GO:0005634">
    <property type="term" value="C:nucleus"/>
    <property type="evidence" value="ECO:0000314"/>
    <property type="project" value="WormBase"/>
</dbReference>
<dbReference type="GO" id="GO:0000987">
    <property type="term" value="F:cis-regulatory region sequence-specific DNA binding"/>
    <property type="evidence" value="ECO:0000314"/>
    <property type="project" value="WormBase"/>
</dbReference>
<dbReference type="GO" id="GO:0000981">
    <property type="term" value="F:DNA-binding transcription factor activity, RNA polymerase II-specific"/>
    <property type="evidence" value="ECO:0000318"/>
    <property type="project" value="GO_Central"/>
</dbReference>
<dbReference type="GO" id="GO:0070411">
    <property type="term" value="F:I-SMAD binding"/>
    <property type="evidence" value="ECO:0000318"/>
    <property type="project" value="GO_Central"/>
</dbReference>
<dbReference type="GO" id="GO:0046872">
    <property type="term" value="F:metal ion binding"/>
    <property type="evidence" value="ECO:0007669"/>
    <property type="project" value="UniProtKB-KW"/>
</dbReference>
<dbReference type="GO" id="GO:0000978">
    <property type="term" value="F:RNA polymerase II cis-regulatory region sequence-specific DNA binding"/>
    <property type="evidence" value="ECO:0000318"/>
    <property type="project" value="GO_Central"/>
</dbReference>
<dbReference type="GO" id="GO:0009653">
    <property type="term" value="P:anatomical structure morphogenesis"/>
    <property type="evidence" value="ECO:0000318"/>
    <property type="project" value="GO_Central"/>
</dbReference>
<dbReference type="GO" id="GO:0030509">
    <property type="term" value="P:BMP signaling pathway"/>
    <property type="evidence" value="ECO:0000318"/>
    <property type="project" value="GO_Central"/>
</dbReference>
<dbReference type="GO" id="GO:0030154">
    <property type="term" value="P:cell differentiation"/>
    <property type="evidence" value="ECO:0000318"/>
    <property type="project" value="GO_Central"/>
</dbReference>
<dbReference type="GO" id="GO:0071444">
    <property type="term" value="P:cellular response to pheromone"/>
    <property type="evidence" value="ECO:0000316"/>
    <property type="project" value="UniProtKB"/>
</dbReference>
<dbReference type="GO" id="GO:0040024">
    <property type="term" value="P:dauer larval development"/>
    <property type="evidence" value="ECO:0000315"/>
    <property type="project" value="WormBase"/>
</dbReference>
<dbReference type="GO" id="GO:0050829">
    <property type="term" value="P:defense response to Gram-negative bacterium"/>
    <property type="evidence" value="ECO:0000316"/>
    <property type="project" value="UniProtKB"/>
</dbReference>
<dbReference type="GO" id="GO:0008340">
    <property type="term" value="P:determination of adult lifespan"/>
    <property type="evidence" value="ECO:0000315"/>
    <property type="project" value="WormBase"/>
</dbReference>
<dbReference type="GO" id="GO:0000122">
    <property type="term" value="P:negative regulation of transcription by RNA polymerase II"/>
    <property type="evidence" value="ECO:0000316"/>
    <property type="project" value="WormBase"/>
</dbReference>
<dbReference type="GO" id="GO:0061066">
    <property type="term" value="P:positive regulation of dauer larval development"/>
    <property type="evidence" value="ECO:0000315"/>
    <property type="project" value="WormBase"/>
</dbReference>
<dbReference type="GO" id="GO:0061065">
    <property type="term" value="P:regulation of dauer larval development"/>
    <property type="evidence" value="ECO:0000316"/>
    <property type="project" value="UniProtKB"/>
</dbReference>
<dbReference type="GO" id="GO:0043051">
    <property type="term" value="P:regulation of nematode pharyngeal pumping"/>
    <property type="evidence" value="ECO:0000316"/>
    <property type="project" value="WormBase"/>
</dbReference>
<dbReference type="GO" id="GO:0006357">
    <property type="term" value="P:regulation of transcription by RNA polymerase II"/>
    <property type="evidence" value="ECO:0000318"/>
    <property type="project" value="GO_Central"/>
</dbReference>
<dbReference type="GO" id="GO:0060395">
    <property type="term" value="P:SMAD protein signal transduction"/>
    <property type="evidence" value="ECO:0000318"/>
    <property type="project" value="GO_Central"/>
</dbReference>
<dbReference type="CDD" id="cd10492">
    <property type="entry name" value="MH1_SMAD_4"/>
    <property type="match status" value="1"/>
</dbReference>
<dbReference type="FunFam" id="3.90.520.10:FF:000002">
    <property type="entry name" value="Mothers against decapentaplegic homolog"/>
    <property type="match status" value="1"/>
</dbReference>
<dbReference type="Gene3D" id="2.60.200.10">
    <property type="match status" value="1"/>
</dbReference>
<dbReference type="Gene3D" id="3.90.520.10">
    <property type="entry name" value="SMAD MH1 domain"/>
    <property type="match status" value="1"/>
</dbReference>
<dbReference type="InterPro" id="IPR013790">
    <property type="entry name" value="Dwarfin"/>
</dbReference>
<dbReference type="InterPro" id="IPR003619">
    <property type="entry name" value="MAD_homology1_Dwarfin-type"/>
</dbReference>
<dbReference type="InterPro" id="IPR013019">
    <property type="entry name" value="MAD_homology_MH1"/>
</dbReference>
<dbReference type="InterPro" id="IPR017855">
    <property type="entry name" value="SMAD-like_dom_sf"/>
</dbReference>
<dbReference type="InterPro" id="IPR001132">
    <property type="entry name" value="SMAD_dom_Dwarfin-type"/>
</dbReference>
<dbReference type="InterPro" id="IPR008984">
    <property type="entry name" value="SMAD_FHA_dom_sf"/>
</dbReference>
<dbReference type="InterPro" id="IPR036578">
    <property type="entry name" value="SMAD_MH1_sf"/>
</dbReference>
<dbReference type="PANTHER" id="PTHR13703">
    <property type="entry name" value="SMAD"/>
    <property type="match status" value="1"/>
</dbReference>
<dbReference type="PANTHER" id="PTHR13703:SF62">
    <property type="entry name" value="SMAD PROTEIN DAF-3"/>
    <property type="match status" value="1"/>
</dbReference>
<dbReference type="Pfam" id="PF03165">
    <property type="entry name" value="MH1"/>
    <property type="match status" value="1"/>
</dbReference>
<dbReference type="Pfam" id="PF03166">
    <property type="entry name" value="MH2"/>
    <property type="match status" value="1"/>
</dbReference>
<dbReference type="SMART" id="SM00523">
    <property type="entry name" value="DWA"/>
    <property type="match status" value="1"/>
</dbReference>
<dbReference type="SMART" id="SM00524">
    <property type="entry name" value="DWB"/>
    <property type="match status" value="1"/>
</dbReference>
<dbReference type="SUPFAM" id="SSF56366">
    <property type="entry name" value="SMAD MH1 domain"/>
    <property type="match status" value="1"/>
</dbReference>
<dbReference type="SUPFAM" id="SSF49879">
    <property type="entry name" value="SMAD/FHA domain"/>
    <property type="match status" value="1"/>
</dbReference>
<dbReference type="PROSITE" id="PS51075">
    <property type="entry name" value="MH1"/>
    <property type="match status" value="1"/>
</dbReference>
<dbReference type="PROSITE" id="PS51076">
    <property type="entry name" value="MH2"/>
    <property type="match status" value="1"/>
</dbReference>
<feature type="chain" id="PRO_0000452403" description="Smad protein daf-3">
    <location>
        <begin position="1"/>
        <end position="892"/>
    </location>
</feature>
<feature type="domain" description="MH1" evidence="1">
    <location>
        <begin position="198"/>
        <end position="347"/>
    </location>
</feature>
<feature type="domain" description="MH2" evidence="2">
    <location>
        <begin position="657"/>
        <end position="880"/>
    </location>
</feature>
<feature type="region of interest" description="Disordered" evidence="4">
    <location>
        <begin position="1"/>
        <end position="43"/>
    </location>
</feature>
<feature type="region of interest" description="Disordered" evidence="4">
    <location>
        <begin position="135"/>
        <end position="161"/>
    </location>
</feature>
<feature type="region of interest" description="Disordered" evidence="4">
    <location>
        <begin position="505"/>
        <end position="552"/>
    </location>
</feature>
<feature type="compositionally biased region" description="Polar residues" evidence="4">
    <location>
        <begin position="15"/>
        <end position="26"/>
    </location>
</feature>
<feature type="compositionally biased region" description="Low complexity" evidence="4">
    <location>
        <begin position="528"/>
        <end position="540"/>
    </location>
</feature>
<feature type="splice variant" id="VSP_060993" description="In isoform i." evidence="12">
    <location>
        <begin position="1"/>
        <end position="609"/>
    </location>
</feature>
<feature type="splice variant" id="VSP_060994" description="In isoform g and isoform h." evidence="12">
    <location>
        <begin position="1"/>
        <end position="112"/>
    </location>
</feature>
<feature type="splice variant" id="VSP_060995" description="In isoform c.">
    <original>MGDHHNLTGLPGTSIPPQFNYSQPGTSTGGPLYGGKPSHGLEDIPDVEEYERNLLGAGAGFNLLNVGNMANEFKPIITLDTKPPRDANKSLAFNGGLKLITPKTE</original>
    <variation>MKLIATSLL</variation>
    <location>
        <begin position="1"/>
        <end position="105"/>
    </location>
</feature>
<feature type="splice variant" id="VSP_060996" description="In isoform f, isoform e and isoform b." evidence="12">
    <location>
        <begin position="72"/>
        <end position="105"/>
    </location>
</feature>
<feature type="splice variant" id="VSP_060997" description="In isoform b." evidence="12">
    <original>M</original>
    <variation>MVGEALQ</variation>
    <location>
        <position position="330"/>
    </location>
</feature>
<feature type="splice variant" id="VSP_060998" description="In isoform d, isoform e and isoform g." evidence="12">
    <original>M</original>
    <variation>MVGE</variation>
    <location>
        <position position="330"/>
    </location>
</feature>
<feature type="mutagenesis site" description="In mg125; suppresses the constitutive dauer arrest phenotype on a daf-7 mutant background." evidence="8">
    <original>P</original>
    <variation>L</variation>
    <location>
        <position position="296"/>
    </location>
</feature>
<feature type="mutagenesis site" description="In mg132; suppresses the constitutive dauer arrest phenotype on a daf-7 mutant background." evidence="8">
    <original>G</original>
    <variation>E</variation>
    <location>
        <position position="716"/>
    </location>
</feature>
<sequence length="892" mass="101059">MGDHHNLTGLPGTSIPPQFNYSQPGTSTGGPLYGGKPSHGLEDIPDVEEYERNLLGAGAGFNLLNVGNMANEFKPIITLDTKPPRDANKSLAFNGGLKLITPKTEVPDEHTPMMSPVNTTTKILQRSGIKMEIPPYLDPDSQDDDPEDGVNYPDPDLFDTKNTNMTEYDLDVLKLGKPAVDEARKKIEVPDASAPPNKIVEYLMYYRTLKESELIQLNAYRTKRNRLSLNLVKNNIDREFDQKACESLVKKLKDKKNDLQNLIDVVLSKGTKYTGCITIPRTLDGRLQVHGRKGFPHVVYGKLWRFNEMTKNETRHVDHCKHAFEMKSDMVCVNPYHYEIVIGTMIVGQRDHDNRDMPPPHQRYHTPGRQDPVDDMSRFIPPASIRPPPMNMHTRPQPMPQQLPSVGATFAHPLPHQAPHNPGVSHPYSIAPQTHYPLNMNPIPQMPQMPQMPPPLHQGYGMNGPSCSSENNNPFHQNHHYNDISHPNHYSYDCGPNLYGFPTPYPDFHHPFNQQPHQPPQLSQNHTSQQGSHQPGHQGQVPNDPPISRPVLQPSTVTLDVFRRYCRQTFGNRFFEGESEQSGAIIRSSNKFIEEFDSPICGVTVVRPRMTDGEVLENIMPEDAPYHDICKFILRLTSESVTFSGEGPEVSDLNEKWGTIVYYEKNLQIGEKKCSRGNFHVDGGFICSENRYSLGLEPNPIREPVAFKVRKAIVDGIRFSYKKDGSVWLQNRMKYPVFVTSGYLDEQSGGLKKDKVHKVYGCASIKTFGFNVSKQIIRDALLSKQMATMYLQGKLTPMNYIYEKKTQEELRREATRTTDSLAKYCCVRVSFCKGFGEAYPERPSIHDCPVWIELKINIAYDFMDSICQYITNCFEPLGMEDFAKLGINVSDD</sequence>
<name>DAF3_CAEEL</name>
<evidence type="ECO:0000255" key="1">
    <source>
        <dbReference type="PROSITE-ProRule" id="PRU00438"/>
    </source>
</evidence>
<evidence type="ECO:0000255" key="2">
    <source>
        <dbReference type="PROSITE-ProRule" id="PRU00439"/>
    </source>
</evidence>
<evidence type="ECO:0000255" key="3">
    <source>
        <dbReference type="RuleBase" id="RU361195"/>
    </source>
</evidence>
<evidence type="ECO:0000256" key="4">
    <source>
        <dbReference type="SAM" id="MobiDB-lite"/>
    </source>
</evidence>
<evidence type="ECO:0000269" key="5">
    <source>
    </source>
</evidence>
<evidence type="ECO:0000269" key="6">
    <source>
    </source>
</evidence>
<evidence type="ECO:0000269" key="7">
    <source>
    </source>
</evidence>
<evidence type="ECO:0000269" key="8">
    <source>
    </source>
</evidence>
<evidence type="ECO:0000269" key="9">
    <source>
    </source>
</evidence>
<evidence type="ECO:0000303" key="10">
    <source>
    </source>
</evidence>
<evidence type="ECO:0000303" key="11">
    <source>
    </source>
</evidence>
<evidence type="ECO:0000305" key="12"/>
<evidence type="ECO:0000312" key="13">
    <source>
        <dbReference type="EMBL" id="AAB61748.1"/>
    </source>
</evidence>
<evidence type="ECO:0000312" key="14">
    <source>
        <dbReference type="Proteomes" id="UP000001940"/>
    </source>
</evidence>
<evidence type="ECO:0000312" key="15">
    <source>
        <dbReference type="WormBase" id="F25E2.5a"/>
    </source>
</evidence>
<evidence type="ECO:0000312" key="16">
    <source>
        <dbReference type="WormBase" id="F25E2.5b"/>
    </source>
</evidence>
<evidence type="ECO:0000312" key="17">
    <source>
        <dbReference type="WormBase" id="F25E2.5c"/>
    </source>
</evidence>
<evidence type="ECO:0000312" key="18">
    <source>
        <dbReference type="WormBase" id="F25E2.5d"/>
    </source>
</evidence>
<evidence type="ECO:0000312" key="19">
    <source>
        <dbReference type="WormBase" id="F25E2.5e"/>
    </source>
</evidence>
<evidence type="ECO:0000312" key="20">
    <source>
        <dbReference type="WormBase" id="F25E2.5f"/>
    </source>
</evidence>
<evidence type="ECO:0000312" key="21">
    <source>
        <dbReference type="WormBase" id="F25E2.5g"/>
    </source>
</evidence>
<evidence type="ECO:0000312" key="22">
    <source>
        <dbReference type="WormBase" id="F25E2.5h"/>
    </source>
</evidence>
<evidence type="ECO:0000312" key="23">
    <source>
        <dbReference type="WormBase" id="F25E2.5i"/>
    </source>
</evidence>
<organism evidence="14">
    <name type="scientific">Caenorhabditis elegans</name>
    <dbReference type="NCBI Taxonomy" id="6239"/>
    <lineage>
        <taxon>Eukaryota</taxon>
        <taxon>Metazoa</taxon>
        <taxon>Ecdysozoa</taxon>
        <taxon>Nematoda</taxon>
        <taxon>Chromadorea</taxon>
        <taxon>Rhabditida</taxon>
        <taxon>Rhabditina</taxon>
        <taxon>Rhabditomorpha</taxon>
        <taxon>Rhabditoidea</taxon>
        <taxon>Rhabditidae</taxon>
        <taxon>Peloderinae</taxon>
        <taxon>Caenorhabditis</taxon>
    </lineage>
</organism>
<protein>
    <recommendedName>
        <fullName evidence="10 11">Smad protein daf-3</fullName>
    </recommendedName>
    <alternativeName>
        <fullName evidence="15">Abnormal dauer formation protein 3</fullName>
    </alternativeName>
</protein>
<keyword id="KW-0025">Alternative splicing</keyword>
<keyword id="KW-0158">Chromosome</keyword>
<keyword id="KW-0963">Cytoplasm</keyword>
<keyword id="KW-0238">DNA-binding</keyword>
<keyword id="KW-0479">Metal-binding</keyword>
<keyword id="KW-0539">Nucleus</keyword>
<keyword id="KW-1185">Reference proteome</keyword>
<keyword id="KW-0804">Transcription</keyword>
<keyword id="KW-0805">Transcription regulation</keyword>
<keyword id="KW-0862">Zinc</keyword>
<gene>
    <name evidence="15" type="primary">daf-3</name>
    <name evidence="15" type="ORF">F25E2.5</name>
</gene>
<reference evidence="14" key="1">
    <citation type="journal article" date="1998" name="Science">
        <title>Genome sequence of the nematode C. elegans: a platform for investigating biology.</title>
        <authorList>
            <consortium name="The C. elegans sequencing consortium"/>
        </authorList>
    </citation>
    <scope>NUCLEOTIDE SEQUENCE [LARGE SCALE GENOMIC DNA]</scope>
    <source>
        <strain evidence="14">Bristol N2</strain>
    </source>
</reference>
<reference evidence="13" key="2">
    <citation type="journal article" date="1997" name="Genes Dev.">
        <title>The DAF-3 Smad protein antagonizes TGF-beta-related receptor signaling in the Caenorhabditis elegans dauer pathway.</title>
        <authorList>
            <person name="Patterson G.I."/>
            <person name="Koweek A."/>
            <person name="Wong A."/>
            <person name="Liu Y."/>
            <person name="Ruvkun G."/>
        </authorList>
    </citation>
    <scope>NUCLEOTIDE SEQUENCE [MRNA] OF 1-105 (ISOFORM B)</scope>
    <scope>FUNCTION</scope>
    <scope>SUBCELLULAR LOCATION</scope>
    <scope>MUTAGENESIS OF PRO-296 AND GLY-716</scope>
</reference>
<reference evidence="12" key="3">
    <citation type="journal article" date="1999" name="Development">
        <title>The DAF-3 Smad binds DNA and represses gene expression in the Caenorhabditis elegans pharynx.</title>
        <authorList>
            <person name="Thatcher J.D."/>
            <person name="Haun C."/>
            <person name="Okkema P.G."/>
        </authorList>
    </citation>
    <scope>FUNCTION</scope>
</reference>
<reference evidence="12" key="4">
    <citation type="journal article" date="2004" name="Development">
        <title>DAF-5 is a Ski oncoprotein homolog that functions in a neuronal TGF beta pathway to regulate C. elegans dauer development.</title>
        <authorList>
            <person name="da Graca L.S."/>
            <person name="Zimmerman K.K."/>
            <person name="Mitchell M.C."/>
            <person name="Kozhan-Gorodetska M."/>
            <person name="Sekiewicz K."/>
            <person name="Morales Y."/>
            <person name="Patterson G.I."/>
        </authorList>
    </citation>
    <scope>FUNCTION</scope>
    <scope>INTERACTION WITH DAF-5</scope>
</reference>
<reference evidence="12" key="5">
    <citation type="journal article" date="2010" name="Development">
        <title>Antagonistic Smad transcription factors control the dauer/non-dauer switch in C. elegans.</title>
        <authorList>
            <person name="Park D."/>
            <person name="Estevez A."/>
            <person name="Riddle D.L."/>
        </authorList>
    </citation>
    <scope>FUNCTION</scope>
    <scope>INTERACTION WITH DAF-8 AND DAF-14</scope>
</reference>
<reference evidence="12" key="6">
    <citation type="journal article" date="2017" name="Development">
        <title>Linking the environment, DAF-7/TGFbeta signaling and LAG-2/DSL ligand expression in the germline stem cell niche.</title>
        <authorList>
            <person name="Pekar O."/>
            <person name="Ow M.C."/>
            <person name="Hui K.Y."/>
            <person name="Noyes M.B."/>
            <person name="Hall S.E."/>
            <person name="Hubbard E.J.A."/>
        </authorList>
    </citation>
    <scope>FUNCTION</scope>
</reference>
<accession>Q95QI7</accession>
<accession>A0A0K3ASQ1</accession>
<accession>A0A0K3ATA0</accession>
<accession>A0A0K3AVK9</accession>
<accession>A0A0K3AVL3</accession>
<accession>A0A0K3AWB3</accession>
<accession>A0A0K3AYJ4</accession>
<accession>O17532</accession>
<accession>Q95QI8</accession>